<protein>
    <recommendedName>
        <fullName evidence="1">Dihydroxy-acid dehydratase 1</fullName>
        <shortName evidence="1">DAD 1</shortName>
        <ecNumber evidence="1">4.2.1.9</ecNumber>
    </recommendedName>
</protein>
<accession>Q5P8J4</accession>
<feature type="chain" id="PRO_0000225364" description="Dihydroxy-acid dehydratase 1">
    <location>
        <begin position="1"/>
        <end position="567"/>
    </location>
</feature>
<feature type="active site" description="Proton acceptor" evidence="1">
    <location>
        <position position="480"/>
    </location>
</feature>
<feature type="binding site" evidence="1">
    <location>
        <position position="57"/>
    </location>
    <ligand>
        <name>[2Fe-2S] cluster</name>
        <dbReference type="ChEBI" id="CHEBI:190135"/>
    </ligand>
</feature>
<feature type="binding site" evidence="1">
    <location>
        <position position="89"/>
    </location>
    <ligand>
        <name>Mg(2+)</name>
        <dbReference type="ChEBI" id="CHEBI:18420"/>
    </ligand>
</feature>
<feature type="binding site" evidence="1">
    <location>
        <position position="130"/>
    </location>
    <ligand>
        <name>[2Fe-2S] cluster</name>
        <dbReference type="ChEBI" id="CHEBI:190135"/>
    </ligand>
</feature>
<feature type="binding site" evidence="1">
    <location>
        <position position="131"/>
    </location>
    <ligand>
        <name>Mg(2+)</name>
        <dbReference type="ChEBI" id="CHEBI:18420"/>
    </ligand>
</feature>
<feature type="binding site" description="via carbamate group" evidence="1">
    <location>
        <position position="132"/>
    </location>
    <ligand>
        <name>Mg(2+)</name>
        <dbReference type="ChEBI" id="CHEBI:18420"/>
    </ligand>
</feature>
<feature type="binding site" evidence="1">
    <location>
        <position position="202"/>
    </location>
    <ligand>
        <name>[2Fe-2S] cluster</name>
        <dbReference type="ChEBI" id="CHEBI:190135"/>
    </ligand>
</feature>
<feature type="binding site" evidence="1">
    <location>
        <position position="454"/>
    </location>
    <ligand>
        <name>Mg(2+)</name>
        <dbReference type="ChEBI" id="CHEBI:18420"/>
    </ligand>
</feature>
<feature type="modified residue" description="N6-carboxylysine" evidence="1">
    <location>
        <position position="132"/>
    </location>
</feature>
<comment type="function">
    <text evidence="1">Functions in the biosynthesis of branched-chain amino acids. Catalyzes the dehydration of (2R,3R)-2,3-dihydroxy-3-methylpentanoate (2,3-dihydroxy-3-methylvalerate) into 2-oxo-3-methylpentanoate (2-oxo-3-methylvalerate) and of (2R)-2,3-dihydroxy-3-methylbutanoate (2,3-dihydroxyisovalerate) into 2-oxo-3-methylbutanoate (2-oxoisovalerate), the penultimate precursor to L-isoleucine and L-valine, respectively.</text>
</comment>
<comment type="catalytic activity">
    <reaction evidence="1">
        <text>(2R)-2,3-dihydroxy-3-methylbutanoate = 3-methyl-2-oxobutanoate + H2O</text>
        <dbReference type="Rhea" id="RHEA:24809"/>
        <dbReference type="ChEBI" id="CHEBI:11851"/>
        <dbReference type="ChEBI" id="CHEBI:15377"/>
        <dbReference type="ChEBI" id="CHEBI:49072"/>
        <dbReference type="EC" id="4.2.1.9"/>
    </reaction>
    <physiologicalReaction direction="left-to-right" evidence="1">
        <dbReference type="Rhea" id="RHEA:24810"/>
    </physiologicalReaction>
</comment>
<comment type="catalytic activity">
    <reaction evidence="1">
        <text>(2R,3R)-2,3-dihydroxy-3-methylpentanoate = (S)-3-methyl-2-oxopentanoate + H2O</text>
        <dbReference type="Rhea" id="RHEA:27694"/>
        <dbReference type="ChEBI" id="CHEBI:15377"/>
        <dbReference type="ChEBI" id="CHEBI:35146"/>
        <dbReference type="ChEBI" id="CHEBI:49258"/>
        <dbReference type="EC" id="4.2.1.9"/>
    </reaction>
    <physiologicalReaction direction="left-to-right" evidence="1">
        <dbReference type="Rhea" id="RHEA:27695"/>
    </physiologicalReaction>
</comment>
<comment type="cofactor">
    <cofactor evidence="1">
        <name>[2Fe-2S] cluster</name>
        <dbReference type="ChEBI" id="CHEBI:190135"/>
    </cofactor>
    <text evidence="1">Binds 1 [2Fe-2S] cluster per subunit. This cluster acts as a Lewis acid cofactor.</text>
</comment>
<comment type="cofactor">
    <cofactor evidence="1">
        <name>Mg(2+)</name>
        <dbReference type="ChEBI" id="CHEBI:18420"/>
    </cofactor>
</comment>
<comment type="pathway">
    <text evidence="1">Amino-acid biosynthesis; L-isoleucine biosynthesis; L-isoleucine from 2-oxobutanoate: step 3/4.</text>
</comment>
<comment type="pathway">
    <text evidence="1">Amino-acid biosynthesis; L-valine biosynthesis; L-valine from pyruvate: step 3/4.</text>
</comment>
<comment type="subunit">
    <text evidence="1">Homodimer.</text>
</comment>
<comment type="similarity">
    <text evidence="1">Belongs to the IlvD/Edd family.</text>
</comment>
<name>ILVD1_AROAE</name>
<dbReference type="EC" id="4.2.1.9" evidence="1"/>
<dbReference type="EMBL" id="CR555306">
    <property type="protein sequence ID" value="CAI06365.1"/>
    <property type="molecule type" value="Genomic_DNA"/>
</dbReference>
<dbReference type="RefSeq" id="WP_011236100.1">
    <property type="nucleotide sequence ID" value="NC_006513.1"/>
</dbReference>
<dbReference type="SMR" id="Q5P8J4"/>
<dbReference type="STRING" id="76114.ebA478"/>
<dbReference type="KEGG" id="eba:ebA478"/>
<dbReference type="eggNOG" id="COG0129">
    <property type="taxonomic scope" value="Bacteria"/>
</dbReference>
<dbReference type="HOGENOM" id="CLU_014271_4_2_4"/>
<dbReference type="OrthoDB" id="9807077at2"/>
<dbReference type="UniPathway" id="UPA00047">
    <property type="reaction ID" value="UER00057"/>
</dbReference>
<dbReference type="UniPathway" id="UPA00049">
    <property type="reaction ID" value="UER00061"/>
</dbReference>
<dbReference type="Proteomes" id="UP000006552">
    <property type="component" value="Chromosome"/>
</dbReference>
<dbReference type="GO" id="GO:0051537">
    <property type="term" value="F:2 iron, 2 sulfur cluster binding"/>
    <property type="evidence" value="ECO:0007669"/>
    <property type="project" value="UniProtKB-UniRule"/>
</dbReference>
<dbReference type="GO" id="GO:0004160">
    <property type="term" value="F:dihydroxy-acid dehydratase activity"/>
    <property type="evidence" value="ECO:0007669"/>
    <property type="project" value="UniProtKB-UniRule"/>
</dbReference>
<dbReference type="GO" id="GO:0000287">
    <property type="term" value="F:magnesium ion binding"/>
    <property type="evidence" value="ECO:0007669"/>
    <property type="project" value="UniProtKB-UniRule"/>
</dbReference>
<dbReference type="GO" id="GO:0009097">
    <property type="term" value="P:isoleucine biosynthetic process"/>
    <property type="evidence" value="ECO:0007669"/>
    <property type="project" value="UniProtKB-UniRule"/>
</dbReference>
<dbReference type="GO" id="GO:0009099">
    <property type="term" value="P:L-valine biosynthetic process"/>
    <property type="evidence" value="ECO:0007669"/>
    <property type="project" value="UniProtKB-UniRule"/>
</dbReference>
<dbReference type="FunFam" id="3.50.30.80:FF:000001">
    <property type="entry name" value="Dihydroxy-acid dehydratase"/>
    <property type="match status" value="1"/>
</dbReference>
<dbReference type="Gene3D" id="3.50.30.80">
    <property type="entry name" value="IlvD/EDD C-terminal domain-like"/>
    <property type="match status" value="1"/>
</dbReference>
<dbReference type="HAMAP" id="MF_00012">
    <property type="entry name" value="IlvD"/>
    <property type="match status" value="1"/>
</dbReference>
<dbReference type="InterPro" id="IPR050165">
    <property type="entry name" value="DHAD_IlvD/Edd"/>
</dbReference>
<dbReference type="InterPro" id="IPR042096">
    <property type="entry name" value="Dihydro-acid_dehy_C"/>
</dbReference>
<dbReference type="InterPro" id="IPR004404">
    <property type="entry name" value="DihydroxyA_deHydtase"/>
</dbReference>
<dbReference type="InterPro" id="IPR020558">
    <property type="entry name" value="DiOHA_6PGluconate_deHydtase_CS"/>
</dbReference>
<dbReference type="InterPro" id="IPR056740">
    <property type="entry name" value="ILV_EDD_C"/>
</dbReference>
<dbReference type="InterPro" id="IPR000581">
    <property type="entry name" value="ILV_EDD_N"/>
</dbReference>
<dbReference type="InterPro" id="IPR037237">
    <property type="entry name" value="IlvD/EDD_N"/>
</dbReference>
<dbReference type="NCBIfam" id="TIGR00110">
    <property type="entry name" value="ilvD"/>
    <property type="match status" value="1"/>
</dbReference>
<dbReference type="NCBIfam" id="NF002068">
    <property type="entry name" value="PRK00911.1"/>
    <property type="match status" value="1"/>
</dbReference>
<dbReference type="PANTHER" id="PTHR21000">
    <property type="entry name" value="DIHYDROXY-ACID DEHYDRATASE DAD"/>
    <property type="match status" value="1"/>
</dbReference>
<dbReference type="PANTHER" id="PTHR21000:SF5">
    <property type="entry name" value="DIHYDROXY-ACID DEHYDRATASE, MITOCHONDRIAL"/>
    <property type="match status" value="1"/>
</dbReference>
<dbReference type="Pfam" id="PF24877">
    <property type="entry name" value="ILV_EDD_C"/>
    <property type="match status" value="1"/>
</dbReference>
<dbReference type="Pfam" id="PF00920">
    <property type="entry name" value="ILVD_EDD_N"/>
    <property type="match status" value="1"/>
</dbReference>
<dbReference type="SUPFAM" id="SSF143975">
    <property type="entry name" value="IlvD/EDD N-terminal domain-like"/>
    <property type="match status" value="1"/>
</dbReference>
<dbReference type="SUPFAM" id="SSF52016">
    <property type="entry name" value="LeuD/IlvD-like"/>
    <property type="match status" value="1"/>
</dbReference>
<dbReference type="PROSITE" id="PS00886">
    <property type="entry name" value="ILVD_EDD_1"/>
    <property type="match status" value="1"/>
</dbReference>
<dbReference type="PROSITE" id="PS00887">
    <property type="entry name" value="ILVD_EDD_2"/>
    <property type="match status" value="1"/>
</dbReference>
<keyword id="KW-0001">2Fe-2S</keyword>
<keyword id="KW-0028">Amino-acid biosynthesis</keyword>
<keyword id="KW-0100">Branched-chain amino acid biosynthesis</keyword>
<keyword id="KW-0408">Iron</keyword>
<keyword id="KW-0411">Iron-sulfur</keyword>
<keyword id="KW-0456">Lyase</keyword>
<keyword id="KW-0460">Magnesium</keyword>
<keyword id="KW-0479">Metal-binding</keyword>
<keyword id="KW-1185">Reference proteome</keyword>
<reference key="1">
    <citation type="journal article" date="2005" name="Arch. Microbiol.">
        <title>The genome sequence of an anaerobic aromatic-degrading denitrifying bacterium, strain EbN1.</title>
        <authorList>
            <person name="Rabus R."/>
            <person name="Kube M."/>
            <person name="Heider J."/>
            <person name="Beck A."/>
            <person name="Heitmann K."/>
            <person name="Widdel F."/>
            <person name="Reinhardt R."/>
        </authorList>
    </citation>
    <scope>NUCLEOTIDE SEQUENCE [LARGE SCALE GENOMIC DNA]</scope>
    <source>
        <strain>DSM 19018 / LMG 30748 / EbN1</strain>
    </source>
</reference>
<organism>
    <name type="scientific">Aromatoleum aromaticum (strain DSM 19018 / LMG 30748 / EbN1)</name>
    <name type="common">Azoarcus sp. (strain EbN1)</name>
    <dbReference type="NCBI Taxonomy" id="76114"/>
    <lineage>
        <taxon>Bacteria</taxon>
        <taxon>Pseudomonadati</taxon>
        <taxon>Pseudomonadota</taxon>
        <taxon>Betaproteobacteria</taxon>
        <taxon>Rhodocyclales</taxon>
        <taxon>Rhodocyclaceae</taxon>
        <taxon>Aromatoleum</taxon>
    </lineage>
</organism>
<proteinExistence type="inferred from homology"/>
<sequence length="567" mass="59808">MSDPTRPARIDERSRNVTEGVMRAPNRSMYYAMGYRETDFGKPMVGVASAHSTITPCNSGLQPLADTVAAALKEAGANPQLFGTPTVSDGIGMGTEGMKYSLVSREVIADSIETCVNGLWQDGVVVIGGCDKNMPGGMMALVRTNVPGIYVYGGTIKPGHYKGRDLNIVSVFEAVGEFIAGQLDPVDFKEIEKRACPGSGSCGGMYTANTMSAAFEALGMSLPYSSTMANEDAEKLASAAESARVLVEAIKRGLRPRDIVTREAIENAVSVIMATGGSTNAVLHFLAIAHAAEVPWTIDDFERIRRRVPVIVDMKPSGRYLATDLHQAGGIPQVMKLLLDAGLLHGACVTITGQTIAEVLENVPAAPRADQGVIRTLSDPLYAEGHLAILRGNLSPEGCVAKISGLKNPAITGPARVFDSEDDAMAAIMARRIVEGDVVVIRYEGPKGGPGMREMLAPTSALVGQGLGESVGLITDGRFSGGTWGMVVGHVSPEAFVGGPIALVREGDSVTIDAHRQLVQLNVGDEELARRAADWTPPSPRYTRGVLAKFAKFASSASKGAVTDLDL</sequence>
<gene>
    <name evidence="1" type="primary">ilvD1</name>
    <name type="ordered locus">AZOSEA02430</name>
    <name type="ORF">ebA478</name>
</gene>
<evidence type="ECO:0000255" key="1">
    <source>
        <dbReference type="HAMAP-Rule" id="MF_00012"/>
    </source>
</evidence>